<proteinExistence type="evidence at protein level"/>
<name>ZNF14_HUMAN</name>
<evidence type="ECO:0000255" key="1">
    <source>
        <dbReference type="PROSITE-ProRule" id="PRU00042"/>
    </source>
</evidence>
<evidence type="ECO:0000255" key="2">
    <source>
        <dbReference type="PROSITE-ProRule" id="PRU00119"/>
    </source>
</evidence>
<evidence type="ECO:0000269" key="3">
    <source ref="1"/>
</evidence>
<evidence type="ECO:0000305" key="4"/>
<feature type="chain" id="PRO_0000047337" description="Zinc finger protein 14">
    <location>
        <begin position="1"/>
        <end position="642"/>
    </location>
</feature>
<feature type="domain" description="KRAB" evidence="2">
    <location>
        <begin position="4"/>
        <end position="76"/>
    </location>
</feature>
<feature type="zinc finger region" description="C2H2-type 1" evidence="1">
    <location>
        <begin position="103"/>
        <end position="125"/>
    </location>
</feature>
<feature type="zinc finger region" description="C2H2-type 2; degenerate" evidence="1">
    <location>
        <begin position="141"/>
        <end position="163"/>
    </location>
</feature>
<feature type="zinc finger region" description="C2H2-type 3" evidence="1">
    <location>
        <begin position="169"/>
        <end position="191"/>
    </location>
</feature>
<feature type="zinc finger region" description="C2H2-type 4; atypical" evidence="1">
    <location>
        <begin position="197"/>
        <end position="217"/>
    </location>
</feature>
<feature type="zinc finger region" description="C2H2-type 5" evidence="1">
    <location>
        <begin position="223"/>
        <end position="245"/>
    </location>
</feature>
<feature type="zinc finger region" description="C2H2-type 6" evidence="1">
    <location>
        <begin position="251"/>
        <end position="273"/>
    </location>
</feature>
<feature type="zinc finger region" description="C2H2-type 7" evidence="1">
    <location>
        <begin position="279"/>
        <end position="301"/>
    </location>
</feature>
<feature type="zinc finger region" description="C2H2-type 8" evidence="1">
    <location>
        <begin position="307"/>
        <end position="329"/>
    </location>
</feature>
<feature type="zinc finger region" description="C2H2-type 9" evidence="1">
    <location>
        <begin position="335"/>
        <end position="357"/>
    </location>
</feature>
<feature type="zinc finger region" description="C2H2-type 10" evidence="1">
    <location>
        <begin position="363"/>
        <end position="385"/>
    </location>
</feature>
<feature type="zinc finger region" description="C2H2-type 11" evidence="1">
    <location>
        <begin position="391"/>
        <end position="413"/>
    </location>
</feature>
<feature type="zinc finger region" description="C2H2-type 12" evidence="1">
    <location>
        <begin position="419"/>
        <end position="441"/>
    </location>
</feature>
<feature type="zinc finger region" description="C2H2-type 13" evidence="1">
    <location>
        <begin position="447"/>
        <end position="469"/>
    </location>
</feature>
<feature type="zinc finger region" description="C2H2-type 14" evidence="1">
    <location>
        <begin position="475"/>
        <end position="497"/>
    </location>
</feature>
<feature type="zinc finger region" description="C2H2-type 15" evidence="1">
    <location>
        <begin position="503"/>
        <end position="525"/>
    </location>
</feature>
<feature type="zinc finger region" description="C2H2-type 16" evidence="1">
    <location>
        <begin position="531"/>
        <end position="553"/>
    </location>
</feature>
<feature type="zinc finger region" description="C2H2-type 17" evidence="1">
    <location>
        <begin position="559"/>
        <end position="581"/>
    </location>
</feature>
<feature type="zinc finger region" description="C2H2-type 18" evidence="1">
    <location>
        <begin position="587"/>
        <end position="609"/>
    </location>
</feature>
<feature type="zinc finger region" description="C2H2-type 19" evidence="1">
    <location>
        <begin position="615"/>
        <end position="637"/>
    </location>
</feature>
<feature type="sequence variant" id="VAR_054791" description="In dbSNP:rs12973901." evidence="3">
    <original>T</original>
    <variation>S</variation>
    <location>
        <position position="274"/>
    </location>
</feature>
<feature type="sequence variant" id="VAR_057381" description="In dbSNP:rs3752153.">
    <original>R</original>
    <variation>Q</variation>
    <location>
        <position position="379"/>
    </location>
</feature>
<sequence length="642" mass="75353">MDSVSFEDVAVNFTLEEWALLDSSQKKLYEDVMQETFKNLVCLGKKWEDQDIEDDHRNQGKNRRCHMVERLCESRRGSKCGETTSQMPNVNINKETFTGAKPHECSFCGRDFIHHSSLNRHMRSHTGQKPNEYQEYEKQPCKCKAVGKTFSYHHCFRKHERTHTGVKPYECKQCGKAFIYYQPFQRHERTHAGQKPYECKQCGKTFIYYQSFQKHAHTGKKPYECKQCGKAFICYQSFQRHKRTHTGEKPYECKQCGKAFSCPTYFRTHERTHTGEKPYKCKECGKAFSFLSSFRRHKRTHSGEKPYECKECGKAFFYSASFRAHVIIHTGARPYKCKECGKAFNSSNSCRVHERTHIGEKPYECKRCGKSFSWSISLRLHERTHTGEKPYECKQCHKTFSFSSSLREHETTHTGEKPYECKQCGKTFSFSSSLQRHERTHNAEKPYECKQCGKAFRCSSYFRIHERSHTGEKPYECKQCGKVFIRSSSFRLHERTHTGEKPYECKLCGKTFSFSSSLREHEKIHTGNKPFECKQCGKAFLRSSQIRLHERTHTGEKPYQCKQCGKAFISSSKFRMHERTHTGEKPYRCKQCGKAFRFSSSVRIHERSHTGEKPYECKQCGKAFISSSHFRLHERTHMGEKV</sequence>
<accession>P17017</accession>
<accession>B9EGA4</accession>
<accession>Q9ULZ5</accession>
<comment type="function">
    <text>May be involved in transcriptional regulation.</text>
</comment>
<comment type="subcellular location">
    <subcellularLocation>
        <location evidence="4">Nucleus</location>
    </subcellularLocation>
</comment>
<comment type="similarity">
    <text evidence="4">Belongs to the krueppel C2H2-type zinc-finger protein family.</text>
</comment>
<reference key="1">
    <citation type="submission" date="1998-12" db="EMBL/GenBank/DDBJ databases">
        <title>Identification and characterization of novel zinc finger proteins in the human ovary.</title>
        <authorList>
            <person name="Okada T."/>
            <person name="Mizutani T."/>
            <person name="Miyamoto K."/>
        </authorList>
    </citation>
    <scope>NUCLEOTIDE SEQUENCE [MRNA]</scope>
    <scope>VARIANT SER-274</scope>
    <source>
        <tissue>Ovary</tissue>
    </source>
</reference>
<reference key="2">
    <citation type="journal article" date="2004" name="Nature">
        <title>The DNA sequence and biology of human chromosome 19.</title>
        <authorList>
            <person name="Grimwood J."/>
            <person name="Gordon L.A."/>
            <person name="Olsen A.S."/>
            <person name="Terry A."/>
            <person name="Schmutz J."/>
            <person name="Lamerdin J.E."/>
            <person name="Hellsten U."/>
            <person name="Goodstein D."/>
            <person name="Couronne O."/>
            <person name="Tran-Gyamfi M."/>
            <person name="Aerts A."/>
            <person name="Altherr M."/>
            <person name="Ashworth L."/>
            <person name="Bajorek E."/>
            <person name="Black S."/>
            <person name="Branscomb E."/>
            <person name="Caenepeel S."/>
            <person name="Carrano A.V."/>
            <person name="Caoile C."/>
            <person name="Chan Y.M."/>
            <person name="Christensen M."/>
            <person name="Cleland C.A."/>
            <person name="Copeland A."/>
            <person name="Dalin E."/>
            <person name="Dehal P."/>
            <person name="Denys M."/>
            <person name="Detter J.C."/>
            <person name="Escobar J."/>
            <person name="Flowers D."/>
            <person name="Fotopulos D."/>
            <person name="Garcia C."/>
            <person name="Georgescu A.M."/>
            <person name="Glavina T."/>
            <person name="Gomez M."/>
            <person name="Gonzales E."/>
            <person name="Groza M."/>
            <person name="Hammon N."/>
            <person name="Hawkins T."/>
            <person name="Haydu L."/>
            <person name="Ho I."/>
            <person name="Huang W."/>
            <person name="Israni S."/>
            <person name="Jett J."/>
            <person name="Kadner K."/>
            <person name="Kimball H."/>
            <person name="Kobayashi A."/>
            <person name="Larionov V."/>
            <person name="Leem S.-H."/>
            <person name="Lopez F."/>
            <person name="Lou Y."/>
            <person name="Lowry S."/>
            <person name="Malfatti S."/>
            <person name="Martinez D."/>
            <person name="McCready P.M."/>
            <person name="Medina C."/>
            <person name="Morgan J."/>
            <person name="Nelson K."/>
            <person name="Nolan M."/>
            <person name="Ovcharenko I."/>
            <person name="Pitluck S."/>
            <person name="Pollard M."/>
            <person name="Popkie A.P."/>
            <person name="Predki P."/>
            <person name="Quan G."/>
            <person name="Ramirez L."/>
            <person name="Rash S."/>
            <person name="Retterer J."/>
            <person name="Rodriguez A."/>
            <person name="Rogers S."/>
            <person name="Salamov A."/>
            <person name="Salazar A."/>
            <person name="She X."/>
            <person name="Smith D."/>
            <person name="Slezak T."/>
            <person name="Solovyev V."/>
            <person name="Thayer N."/>
            <person name="Tice H."/>
            <person name="Tsai M."/>
            <person name="Ustaszewska A."/>
            <person name="Vo N."/>
            <person name="Wagner M."/>
            <person name="Wheeler J."/>
            <person name="Wu K."/>
            <person name="Xie G."/>
            <person name="Yang J."/>
            <person name="Dubchak I."/>
            <person name="Furey T.S."/>
            <person name="DeJong P."/>
            <person name="Dickson M."/>
            <person name="Gordon D."/>
            <person name="Eichler E.E."/>
            <person name="Pennacchio L.A."/>
            <person name="Richardson P."/>
            <person name="Stubbs L."/>
            <person name="Rokhsar D.S."/>
            <person name="Myers R.M."/>
            <person name="Rubin E.M."/>
            <person name="Lucas S.M."/>
        </authorList>
    </citation>
    <scope>NUCLEOTIDE SEQUENCE [LARGE SCALE GENOMIC DNA]</scope>
</reference>
<reference key="3">
    <citation type="submission" date="2005-07" db="EMBL/GenBank/DDBJ databases">
        <authorList>
            <person name="Mural R.J."/>
            <person name="Istrail S."/>
            <person name="Sutton G.G."/>
            <person name="Florea L."/>
            <person name="Halpern A.L."/>
            <person name="Mobarry C.M."/>
            <person name="Lippert R."/>
            <person name="Walenz B."/>
            <person name="Shatkay H."/>
            <person name="Dew I."/>
            <person name="Miller J.R."/>
            <person name="Flanigan M.J."/>
            <person name="Edwards N.J."/>
            <person name="Bolanos R."/>
            <person name="Fasulo D."/>
            <person name="Halldorsson B.V."/>
            <person name="Hannenhalli S."/>
            <person name="Turner R."/>
            <person name="Yooseph S."/>
            <person name="Lu F."/>
            <person name="Nusskern D.R."/>
            <person name="Shue B.C."/>
            <person name="Zheng X.H."/>
            <person name="Zhong F."/>
            <person name="Delcher A.L."/>
            <person name="Huson D.H."/>
            <person name="Kravitz S.A."/>
            <person name="Mouchard L."/>
            <person name="Reinert K."/>
            <person name="Remington K.A."/>
            <person name="Clark A.G."/>
            <person name="Waterman M.S."/>
            <person name="Eichler E.E."/>
            <person name="Adams M.D."/>
            <person name="Hunkapiller M.W."/>
            <person name="Myers E.W."/>
            <person name="Venter J.C."/>
        </authorList>
    </citation>
    <scope>NUCLEOTIDE SEQUENCE [LARGE SCALE GENOMIC DNA]</scope>
</reference>
<reference key="4">
    <citation type="journal article" date="2004" name="Genome Res.">
        <title>The status, quality, and expansion of the NIH full-length cDNA project: the Mammalian Gene Collection (MGC).</title>
        <authorList>
            <consortium name="The MGC Project Team"/>
        </authorList>
    </citation>
    <scope>NUCLEOTIDE SEQUENCE [LARGE SCALE MRNA]</scope>
    <source>
        <tissue>Lung</tissue>
    </source>
</reference>
<reference key="5">
    <citation type="journal article" date="1990" name="New Biol.">
        <title>Multiple genes encoding zinc finger domains are expressed in human T cells.</title>
        <authorList>
            <person name="Thiesen H.-J."/>
        </authorList>
    </citation>
    <scope>NUCLEOTIDE SEQUENCE [MRNA] OF 391-446</scope>
    <source>
        <tissue>Lymphoid tissue</tissue>
    </source>
</reference>
<gene>
    <name type="primary">ZNF14</name>
    <name type="synonym">GIOT4</name>
    <name type="synonym">KOX6</name>
</gene>
<keyword id="KW-0238">DNA-binding</keyword>
<keyword id="KW-0479">Metal-binding</keyword>
<keyword id="KW-0539">Nucleus</keyword>
<keyword id="KW-1267">Proteomics identification</keyword>
<keyword id="KW-1185">Reference proteome</keyword>
<keyword id="KW-0677">Repeat</keyword>
<keyword id="KW-0804">Transcription</keyword>
<keyword id="KW-0805">Transcription regulation</keyword>
<keyword id="KW-0862">Zinc</keyword>
<keyword id="KW-0863">Zinc-finger</keyword>
<protein>
    <recommendedName>
        <fullName>Zinc finger protein 14</fullName>
    </recommendedName>
    <alternativeName>
        <fullName>Gonadotropin-inducible ovary transcription repressor 4</fullName>
        <shortName>GIOT-4</shortName>
    </alternativeName>
    <alternativeName>
        <fullName>Zinc finger protein KOX6</fullName>
    </alternativeName>
</protein>
<organism>
    <name type="scientific">Homo sapiens</name>
    <name type="common">Human</name>
    <dbReference type="NCBI Taxonomy" id="9606"/>
    <lineage>
        <taxon>Eukaryota</taxon>
        <taxon>Metazoa</taxon>
        <taxon>Chordata</taxon>
        <taxon>Craniata</taxon>
        <taxon>Vertebrata</taxon>
        <taxon>Euteleostomi</taxon>
        <taxon>Mammalia</taxon>
        <taxon>Eutheria</taxon>
        <taxon>Euarchontoglires</taxon>
        <taxon>Primates</taxon>
        <taxon>Haplorrhini</taxon>
        <taxon>Catarrhini</taxon>
        <taxon>Hominidae</taxon>
        <taxon>Homo</taxon>
    </lineage>
</organism>
<dbReference type="EMBL" id="AB021644">
    <property type="protein sequence ID" value="BAA86990.1"/>
    <property type="molecule type" value="mRNA"/>
</dbReference>
<dbReference type="EMBL" id="AC011458">
    <property type="status" value="NOT_ANNOTATED_CDS"/>
    <property type="molecule type" value="Genomic_DNA"/>
</dbReference>
<dbReference type="EMBL" id="CH471106">
    <property type="protein sequence ID" value="EAW84858.1"/>
    <property type="molecule type" value="Genomic_DNA"/>
</dbReference>
<dbReference type="EMBL" id="BC136323">
    <property type="protein sequence ID" value="AAI36324.1"/>
    <property type="molecule type" value="mRNA"/>
</dbReference>
<dbReference type="EMBL" id="X52337">
    <property type="protein sequence ID" value="CAA36563.1"/>
    <property type="molecule type" value="mRNA"/>
</dbReference>
<dbReference type="CCDS" id="CCDS12409.1"/>
<dbReference type="PIR" id="I37974">
    <property type="entry name" value="I37974"/>
</dbReference>
<dbReference type="RefSeq" id="NP_066358.2">
    <property type="nucleotide sequence ID" value="NM_021030.2"/>
</dbReference>
<dbReference type="SMR" id="P17017"/>
<dbReference type="BioGRID" id="113393">
    <property type="interactions" value="9"/>
</dbReference>
<dbReference type="FunCoup" id="P17017">
    <property type="interactions" value="665"/>
</dbReference>
<dbReference type="IntAct" id="P17017">
    <property type="interactions" value="3"/>
</dbReference>
<dbReference type="STRING" id="9606.ENSP00000340514"/>
<dbReference type="GlyGen" id="P17017">
    <property type="glycosylation" value="1 site, 1 O-linked glycan (1 site)"/>
</dbReference>
<dbReference type="iPTMnet" id="P17017"/>
<dbReference type="PhosphoSitePlus" id="P17017"/>
<dbReference type="BioMuta" id="ZNF14"/>
<dbReference type="DMDM" id="313104250"/>
<dbReference type="jPOST" id="P17017"/>
<dbReference type="MassIVE" id="P17017"/>
<dbReference type="PaxDb" id="9606-ENSP00000340514"/>
<dbReference type="PeptideAtlas" id="P17017"/>
<dbReference type="ProteomicsDB" id="53414"/>
<dbReference type="Pumba" id="P17017"/>
<dbReference type="Antibodypedia" id="28563">
    <property type="antibodies" value="48 antibodies from 16 providers"/>
</dbReference>
<dbReference type="DNASU" id="7561"/>
<dbReference type="Ensembl" id="ENST00000344099.4">
    <property type="protein sequence ID" value="ENSP00000340514.2"/>
    <property type="gene ID" value="ENSG00000105708.9"/>
</dbReference>
<dbReference type="GeneID" id="7561"/>
<dbReference type="KEGG" id="hsa:7561"/>
<dbReference type="MANE-Select" id="ENST00000344099.4">
    <property type="protein sequence ID" value="ENSP00000340514.2"/>
    <property type="RefSeq nucleotide sequence ID" value="NM_021030.3"/>
    <property type="RefSeq protein sequence ID" value="NP_066358.2"/>
</dbReference>
<dbReference type="UCSC" id="uc002nnk.2">
    <property type="organism name" value="human"/>
</dbReference>
<dbReference type="AGR" id="HGNC:12924"/>
<dbReference type="CTD" id="7561"/>
<dbReference type="DisGeNET" id="7561"/>
<dbReference type="GeneCards" id="ZNF14"/>
<dbReference type="HGNC" id="HGNC:12924">
    <property type="gene designation" value="ZNF14"/>
</dbReference>
<dbReference type="HPA" id="ENSG00000105708">
    <property type="expression patterns" value="Low tissue specificity"/>
</dbReference>
<dbReference type="MIM" id="194556">
    <property type="type" value="gene"/>
</dbReference>
<dbReference type="neXtProt" id="NX_P17017"/>
<dbReference type="OpenTargets" id="ENSG00000105708"/>
<dbReference type="PharmGKB" id="PA37511"/>
<dbReference type="VEuPathDB" id="HostDB:ENSG00000105708"/>
<dbReference type="eggNOG" id="KOG1721">
    <property type="taxonomic scope" value="Eukaryota"/>
</dbReference>
<dbReference type="GeneTree" id="ENSGT00950000182755"/>
<dbReference type="HOGENOM" id="CLU_002678_44_3_1"/>
<dbReference type="InParanoid" id="P17017"/>
<dbReference type="OMA" id="PCKCKAV"/>
<dbReference type="PAN-GO" id="P17017">
    <property type="GO annotations" value="4 GO annotations based on evolutionary models"/>
</dbReference>
<dbReference type="PhylomeDB" id="P17017"/>
<dbReference type="TreeFam" id="TF343410"/>
<dbReference type="PathwayCommons" id="P17017"/>
<dbReference type="Reactome" id="R-HSA-212436">
    <property type="pathway name" value="Generic Transcription Pathway"/>
</dbReference>
<dbReference type="BioGRID-ORCS" id="7561">
    <property type="hits" value="85 hits in 1141 CRISPR screens"/>
</dbReference>
<dbReference type="ChiTaRS" id="ZNF14">
    <property type="organism name" value="human"/>
</dbReference>
<dbReference type="GenomeRNAi" id="7561"/>
<dbReference type="Pharos" id="P17017">
    <property type="development level" value="Tdark"/>
</dbReference>
<dbReference type="PRO" id="PR:P17017"/>
<dbReference type="Proteomes" id="UP000005640">
    <property type="component" value="Chromosome 19"/>
</dbReference>
<dbReference type="RNAct" id="P17017">
    <property type="molecule type" value="protein"/>
</dbReference>
<dbReference type="Bgee" id="ENSG00000105708">
    <property type="expression patterns" value="Expressed in secondary oocyte and 195 other cell types or tissues"/>
</dbReference>
<dbReference type="GO" id="GO:0005634">
    <property type="term" value="C:nucleus"/>
    <property type="evidence" value="ECO:0000318"/>
    <property type="project" value="GO_Central"/>
</dbReference>
<dbReference type="GO" id="GO:0000981">
    <property type="term" value="F:DNA-binding transcription factor activity, RNA polymerase II-specific"/>
    <property type="evidence" value="ECO:0000318"/>
    <property type="project" value="GO_Central"/>
</dbReference>
<dbReference type="GO" id="GO:0000977">
    <property type="term" value="F:RNA polymerase II transcription regulatory region sequence-specific DNA binding"/>
    <property type="evidence" value="ECO:0000318"/>
    <property type="project" value="GO_Central"/>
</dbReference>
<dbReference type="GO" id="GO:0008270">
    <property type="term" value="F:zinc ion binding"/>
    <property type="evidence" value="ECO:0007669"/>
    <property type="project" value="UniProtKB-KW"/>
</dbReference>
<dbReference type="GO" id="GO:0006357">
    <property type="term" value="P:regulation of transcription by RNA polymerase II"/>
    <property type="evidence" value="ECO:0000318"/>
    <property type="project" value="GO_Central"/>
</dbReference>
<dbReference type="CDD" id="cd07765">
    <property type="entry name" value="KRAB_A-box"/>
    <property type="match status" value="1"/>
</dbReference>
<dbReference type="FunFam" id="3.30.160.60:FF:000325">
    <property type="entry name" value="ZFP90 zinc finger protein"/>
    <property type="match status" value="1"/>
</dbReference>
<dbReference type="FunFam" id="3.30.160.60:FF:000838">
    <property type="entry name" value="Zinc finger protein 14"/>
    <property type="match status" value="6"/>
</dbReference>
<dbReference type="FunFam" id="3.30.160.60:FF:001223">
    <property type="entry name" value="Zinc finger protein 14"/>
    <property type="match status" value="3"/>
</dbReference>
<dbReference type="FunFam" id="3.30.160.60:FF:001009">
    <property type="entry name" value="Zinc finger protein 26"/>
    <property type="match status" value="1"/>
</dbReference>
<dbReference type="FunFam" id="3.30.160.60:FF:000184">
    <property type="entry name" value="Zinc finger protein 333"/>
    <property type="match status" value="2"/>
</dbReference>
<dbReference type="FunFam" id="3.30.160.60:FF:001602">
    <property type="entry name" value="Zinc finger protein 490"/>
    <property type="match status" value="1"/>
</dbReference>
<dbReference type="FunFam" id="3.30.160.60:FF:002254">
    <property type="entry name" value="Zinc finger protein 540"/>
    <property type="match status" value="1"/>
</dbReference>
<dbReference type="FunFam" id="3.30.160.60:FF:000371">
    <property type="entry name" value="Zinc finger protein 555"/>
    <property type="match status" value="1"/>
</dbReference>
<dbReference type="FunFam" id="3.30.160.60:FF:000156">
    <property type="entry name" value="Zinc finger protein 568"/>
    <property type="match status" value="2"/>
</dbReference>
<dbReference type="Gene3D" id="6.10.140.140">
    <property type="match status" value="1"/>
</dbReference>
<dbReference type="Gene3D" id="3.30.160.60">
    <property type="entry name" value="Classic Zinc Finger"/>
    <property type="match status" value="19"/>
</dbReference>
<dbReference type="InterPro" id="IPR050636">
    <property type="entry name" value="C2H2-ZF_domain-containing"/>
</dbReference>
<dbReference type="InterPro" id="IPR001909">
    <property type="entry name" value="KRAB"/>
</dbReference>
<dbReference type="InterPro" id="IPR036051">
    <property type="entry name" value="KRAB_dom_sf"/>
</dbReference>
<dbReference type="InterPro" id="IPR036236">
    <property type="entry name" value="Znf_C2H2_sf"/>
</dbReference>
<dbReference type="InterPro" id="IPR013087">
    <property type="entry name" value="Znf_C2H2_type"/>
</dbReference>
<dbReference type="PANTHER" id="PTHR47772:SF12">
    <property type="entry name" value="RB-ASSOCIATED KRAB ZINC FINGER-RELATED"/>
    <property type="match status" value="1"/>
</dbReference>
<dbReference type="PANTHER" id="PTHR47772">
    <property type="entry name" value="ZINC FINGER PROTEIN 200"/>
    <property type="match status" value="1"/>
</dbReference>
<dbReference type="Pfam" id="PF01352">
    <property type="entry name" value="KRAB"/>
    <property type="match status" value="1"/>
</dbReference>
<dbReference type="Pfam" id="PF00096">
    <property type="entry name" value="zf-C2H2"/>
    <property type="match status" value="14"/>
</dbReference>
<dbReference type="Pfam" id="PF13912">
    <property type="entry name" value="zf-C2H2_6"/>
    <property type="match status" value="2"/>
</dbReference>
<dbReference type="SMART" id="SM00349">
    <property type="entry name" value="KRAB"/>
    <property type="match status" value="1"/>
</dbReference>
<dbReference type="SMART" id="SM00355">
    <property type="entry name" value="ZnF_C2H2"/>
    <property type="match status" value="18"/>
</dbReference>
<dbReference type="SUPFAM" id="SSF57667">
    <property type="entry name" value="beta-beta-alpha zinc fingers"/>
    <property type="match status" value="11"/>
</dbReference>
<dbReference type="SUPFAM" id="SSF109640">
    <property type="entry name" value="KRAB domain (Kruppel-associated box)"/>
    <property type="match status" value="1"/>
</dbReference>
<dbReference type="PROSITE" id="PS50805">
    <property type="entry name" value="KRAB"/>
    <property type="match status" value="1"/>
</dbReference>
<dbReference type="PROSITE" id="PS00028">
    <property type="entry name" value="ZINC_FINGER_C2H2_1"/>
    <property type="match status" value="17"/>
</dbReference>
<dbReference type="PROSITE" id="PS50157">
    <property type="entry name" value="ZINC_FINGER_C2H2_2"/>
    <property type="match status" value="19"/>
</dbReference>